<feature type="chain" id="PRO_1000137908" description="Undecaprenyl-phosphate 4-deoxy-4-formamido-L-arabinose transferase">
    <location>
        <begin position="1"/>
        <end position="322"/>
    </location>
</feature>
<feature type="topological domain" description="Cytoplasmic" evidence="1">
    <location>
        <begin position="1"/>
        <end position="235"/>
    </location>
</feature>
<feature type="transmembrane region" description="Helical" evidence="1">
    <location>
        <begin position="236"/>
        <end position="256"/>
    </location>
</feature>
<feature type="topological domain" description="Periplasmic" evidence="1">
    <location>
        <begin position="257"/>
        <end position="269"/>
    </location>
</feature>
<feature type="transmembrane region" description="Helical" evidence="1">
    <location>
        <begin position="270"/>
        <end position="290"/>
    </location>
</feature>
<feature type="topological domain" description="Cytoplasmic" evidence="1">
    <location>
        <begin position="291"/>
        <end position="322"/>
    </location>
</feature>
<proteinExistence type="inferred from homology"/>
<dbReference type="EC" id="2.4.2.53" evidence="1"/>
<dbReference type="EMBL" id="CP001164">
    <property type="protein sequence ID" value="ACI37259.1"/>
    <property type="molecule type" value="Genomic_DNA"/>
</dbReference>
<dbReference type="RefSeq" id="WP_000461646.1">
    <property type="nucleotide sequence ID" value="NC_011353.1"/>
</dbReference>
<dbReference type="SMR" id="B5YX45"/>
<dbReference type="CAZy" id="GT2">
    <property type="family name" value="Glycosyltransferase Family 2"/>
</dbReference>
<dbReference type="KEGG" id="ecf:ECH74115_3395"/>
<dbReference type="HOGENOM" id="CLU_033536_0_0_6"/>
<dbReference type="UniPathway" id="UPA00030"/>
<dbReference type="UniPathway" id="UPA00036">
    <property type="reaction ID" value="UER00495"/>
</dbReference>
<dbReference type="GO" id="GO:0005886">
    <property type="term" value="C:plasma membrane"/>
    <property type="evidence" value="ECO:0007669"/>
    <property type="project" value="UniProtKB-SubCell"/>
</dbReference>
<dbReference type="GO" id="GO:0016780">
    <property type="term" value="F:phosphotransferase activity, for other substituted phosphate groups"/>
    <property type="evidence" value="ECO:0007669"/>
    <property type="project" value="UniProtKB-UniRule"/>
</dbReference>
<dbReference type="GO" id="GO:0099621">
    <property type="term" value="F:undecaprenyl-phosphate 4-deoxy-4-formamido-L-arabinose transferase activity"/>
    <property type="evidence" value="ECO:0007669"/>
    <property type="project" value="UniProtKB-EC"/>
</dbReference>
<dbReference type="GO" id="GO:0036108">
    <property type="term" value="P:4-amino-4-deoxy-alpha-L-arabinopyranosyl undecaprenyl phosphate biosynthetic process"/>
    <property type="evidence" value="ECO:0007669"/>
    <property type="project" value="UniProtKB-UniRule"/>
</dbReference>
<dbReference type="GO" id="GO:0009245">
    <property type="term" value="P:lipid A biosynthetic process"/>
    <property type="evidence" value="ECO:0007669"/>
    <property type="project" value="UniProtKB-UniRule"/>
</dbReference>
<dbReference type="GO" id="GO:0009103">
    <property type="term" value="P:lipopolysaccharide biosynthetic process"/>
    <property type="evidence" value="ECO:0007669"/>
    <property type="project" value="UniProtKB-UniRule"/>
</dbReference>
<dbReference type="GO" id="GO:0046677">
    <property type="term" value="P:response to antibiotic"/>
    <property type="evidence" value="ECO:0007669"/>
    <property type="project" value="UniProtKB-KW"/>
</dbReference>
<dbReference type="CDD" id="cd04187">
    <property type="entry name" value="DPM1_like_bac"/>
    <property type="match status" value="1"/>
</dbReference>
<dbReference type="FunFam" id="3.90.550.10:FF:000019">
    <property type="entry name" value="Undecaprenyl-phosphate 4-deoxy-4-formamido-L-arabinose transferase"/>
    <property type="match status" value="1"/>
</dbReference>
<dbReference type="Gene3D" id="3.90.550.10">
    <property type="entry name" value="Spore Coat Polysaccharide Biosynthesis Protein SpsA, Chain A"/>
    <property type="match status" value="1"/>
</dbReference>
<dbReference type="HAMAP" id="MF_01164">
    <property type="entry name" value="ArnC_transfer"/>
    <property type="match status" value="1"/>
</dbReference>
<dbReference type="InterPro" id="IPR022857">
    <property type="entry name" value="ArnC_tfrase"/>
</dbReference>
<dbReference type="InterPro" id="IPR001173">
    <property type="entry name" value="Glyco_trans_2-like"/>
</dbReference>
<dbReference type="InterPro" id="IPR050256">
    <property type="entry name" value="Glycosyltransferase_2"/>
</dbReference>
<dbReference type="InterPro" id="IPR029044">
    <property type="entry name" value="Nucleotide-diphossugar_trans"/>
</dbReference>
<dbReference type="NCBIfam" id="NF007986">
    <property type="entry name" value="PRK10714.1"/>
    <property type="match status" value="1"/>
</dbReference>
<dbReference type="PANTHER" id="PTHR48090:SF3">
    <property type="entry name" value="UNDECAPRENYL-PHOSPHATE 4-DEOXY-4-FORMAMIDO-L-ARABINOSE TRANSFERASE"/>
    <property type="match status" value="1"/>
</dbReference>
<dbReference type="PANTHER" id="PTHR48090">
    <property type="entry name" value="UNDECAPRENYL-PHOSPHATE 4-DEOXY-4-FORMAMIDO-L-ARABINOSE TRANSFERASE-RELATED"/>
    <property type="match status" value="1"/>
</dbReference>
<dbReference type="Pfam" id="PF00535">
    <property type="entry name" value="Glycos_transf_2"/>
    <property type="match status" value="1"/>
</dbReference>
<dbReference type="SUPFAM" id="SSF53448">
    <property type="entry name" value="Nucleotide-diphospho-sugar transferases"/>
    <property type="match status" value="1"/>
</dbReference>
<accession>B5YX45</accession>
<evidence type="ECO:0000255" key="1">
    <source>
        <dbReference type="HAMAP-Rule" id="MF_01164"/>
    </source>
</evidence>
<sequence>MFEIHPVKKVSVVIPVYNEQESLPELIRRTTTACESLGKEYEILLIDDGSSDNSAHILVEASQAENSHIVSILLNRNYGQHSAIMAGFSHVTGDLIITLDADLQNPPEEIPRLVAKADEGYDVVGTVRQNRQDSWFRKTASKMINRLIQRTTGKAMGDYGCMLRAYRRHIVDAMLHCHERSTFIPILANIFARRAIEIPVHHAEREYGESKYSFMRLINLMYDLVTCLTTTPLRMLSLLGSIIAIGGFSIAVLLVILRLTFGPQWAAEGVFMLFAVLFTFIGAQFIGMGLLGEYIGRIYTDVRARPRYFVQQVIRPSSKENE</sequence>
<name>ARNC_ECO5E</name>
<protein>
    <recommendedName>
        <fullName evidence="1">Undecaprenyl-phosphate 4-deoxy-4-formamido-L-arabinose transferase</fullName>
        <ecNumber evidence="1">2.4.2.53</ecNumber>
    </recommendedName>
    <alternativeName>
        <fullName evidence="1">Undecaprenyl-phosphate Ara4FN transferase</fullName>
        <shortName evidence="1">Ara4FN transferase</shortName>
    </alternativeName>
</protein>
<keyword id="KW-0046">Antibiotic resistance</keyword>
<keyword id="KW-0997">Cell inner membrane</keyword>
<keyword id="KW-1003">Cell membrane</keyword>
<keyword id="KW-0328">Glycosyltransferase</keyword>
<keyword id="KW-0441">Lipid A biosynthesis</keyword>
<keyword id="KW-0444">Lipid biosynthesis</keyword>
<keyword id="KW-0443">Lipid metabolism</keyword>
<keyword id="KW-0448">Lipopolysaccharide biosynthesis</keyword>
<keyword id="KW-0472">Membrane</keyword>
<keyword id="KW-0808">Transferase</keyword>
<keyword id="KW-0812">Transmembrane</keyword>
<keyword id="KW-1133">Transmembrane helix</keyword>
<reference key="1">
    <citation type="journal article" date="2011" name="Proc. Natl. Acad. Sci. U.S.A.">
        <title>Genomic anatomy of Escherichia coli O157:H7 outbreaks.</title>
        <authorList>
            <person name="Eppinger M."/>
            <person name="Mammel M.K."/>
            <person name="Leclerc J.E."/>
            <person name="Ravel J."/>
            <person name="Cebula T.A."/>
        </authorList>
    </citation>
    <scope>NUCLEOTIDE SEQUENCE [LARGE SCALE GENOMIC DNA]</scope>
    <source>
        <strain>EC4115 / EHEC</strain>
    </source>
</reference>
<gene>
    <name evidence="1" type="primary">arnC</name>
    <name type="ordered locus">ECH74115_3395</name>
</gene>
<organism>
    <name type="scientific">Escherichia coli O157:H7 (strain EC4115 / EHEC)</name>
    <dbReference type="NCBI Taxonomy" id="444450"/>
    <lineage>
        <taxon>Bacteria</taxon>
        <taxon>Pseudomonadati</taxon>
        <taxon>Pseudomonadota</taxon>
        <taxon>Gammaproteobacteria</taxon>
        <taxon>Enterobacterales</taxon>
        <taxon>Enterobacteriaceae</taxon>
        <taxon>Escherichia</taxon>
    </lineage>
</organism>
<comment type="function">
    <text evidence="1">Catalyzes the transfer of 4-deoxy-4-formamido-L-arabinose from UDP to undecaprenyl phosphate. The modified arabinose is attached to lipid A and is required for resistance to polymyxin and cationic antimicrobial peptides.</text>
</comment>
<comment type="catalytic activity">
    <reaction evidence="1">
        <text>UDP-4-deoxy-4-formamido-beta-L-arabinose + di-trans,octa-cis-undecaprenyl phosphate = 4-deoxy-4-formamido-alpha-L-arabinopyranosyl di-trans,octa-cis-undecaprenyl phosphate + UDP</text>
        <dbReference type="Rhea" id="RHEA:27722"/>
        <dbReference type="ChEBI" id="CHEBI:58223"/>
        <dbReference type="ChEBI" id="CHEBI:58709"/>
        <dbReference type="ChEBI" id="CHEBI:58909"/>
        <dbReference type="ChEBI" id="CHEBI:60392"/>
        <dbReference type="EC" id="2.4.2.53"/>
    </reaction>
</comment>
<comment type="pathway">
    <text evidence="1">Glycolipid biosynthesis; 4-amino-4-deoxy-alpha-L-arabinose undecaprenyl phosphate biosynthesis; 4-amino-4-deoxy-alpha-L-arabinose undecaprenyl phosphate from UDP-4-deoxy-4-formamido-beta-L-arabinose and undecaprenyl phosphate: step 1/2.</text>
</comment>
<comment type="pathway">
    <text evidence="1">Bacterial outer membrane biogenesis; lipopolysaccharide biosynthesis.</text>
</comment>
<comment type="subcellular location">
    <subcellularLocation>
        <location evidence="1">Cell inner membrane</location>
        <topology evidence="1">Multi-pass membrane protein</topology>
    </subcellularLocation>
</comment>
<comment type="similarity">
    <text evidence="1">Belongs to the glycosyltransferase 2 family.</text>
</comment>